<sequence>MKWLLLLGLLALSECIVHKVPLVRKKSLRKNLIEKGLLQDYLKTHTPNPATKYFPKETFATVSTESMENYLDAEYFGTISIGTPPQDFTVIFDTGSSNLWVPSTYCSSLACALHKRFNPEDSSTYQGTSETLSITYGTGSMTGILGYDTVKVGSIEDTNQIFGLSKTEPSLTFLFAPFDGILGLAYPSISSSDATPVFDNMWNEGLVSQDLFSVYLSSDDEKGSLVMFGGIDSSYYTGSLNWVPVSYEGYWQITMDSVSINGETIACADSCQAIVDTGTSLLTGPTSAISNIQSYIGASKNLLGENVISCSAIDSLPDIVFTINGIQYPLPASAYILKEDDDCTSGLEGMNVDTYTGELWILGDVFIRQYFTVFDRANNQLGLAAAV</sequence>
<reference key="1">
    <citation type="journal article" date="1990" name="J. Biol. Chem.">
        <title>Structure and development of rabbit pepsinogens. Stage-specific zymogens, nucleotide sequences of cDNAs, molecular evolution, and gene expression during development.</title>
        <authorList>
            <person name="Kageyama T."/>
            <person name="Tanabe K."/>
            <person name="Koiwai O."/>
        </authorList>
    </citation>
    <scope>NUCLEOTIDE SEQUENCE [MRNA]</scope>
    <source>
        <strain>Japanese white</strain>
        <tissue>Gastric mucosa</tissue>
    </source>
</reference>
<dbReference type="EC" id="3.4.23.1"/>
<dbReference type="EMBL" id="M59235">
    <property type="protein sequence ID" value="AAA85369.1"/>
    <property type="molecule type" value="mRNA"/>
</dbReference>
<dbReference type="PIR" id="C38302">
    <property type="entry name" value="C38302"/>
</dbReference>
<dbReference type="RefSeq" id="NP_001164557.1">
    <property type="nucleotide sequence ID" value="NM_001171086.1"/>
</dbReference>
<dbReference type="SMR" id="P27821"/>
<dbReference type="MEROPS" id="A01.001"/>
<dbReference type="GeneID" id="100328624"/>
<dbReference type="eggNOG" id="KOG1339">
    <property type="taxonomic scope" value="Eukaryota"/>
</dbReference>
<dbReference type="InParanoid" id="P27821"/>
<dbReference type="Proteomes" id="UP000001811">
    <property type="component" value="Unplaced"/>
</dbReference>
<dbReference type="GO" id="GO:0005576">
    <property type="term" value="C:extracellular region"/>
    <property type="evidence" value="ECO:0007669"/>
    <property type="project" value="UniProtKB-SubCell"/>
</dbReference>
<dbReference type="GO" id="GO:0004190">
    <property type="term" value="F:aspartic-type endopeptidase activity"/>
    <property type="evidence" value="ECO:0007669"/>
    <property type="project" value="UniProtKB-KW"/>
</dbReference>
<dbReference type="GO" id="GO:0007586">
    <property type="term" value="P:digestion"/>
    <property type="evidence" value="ECO:0007669"/>
    <property type="project" value="UniProtKB-KW"/>
</dbReference>
<dbReference type="GO" id="GO:0006508">
    <property type="term" value="P:proteolysis"/>
    <property type="evidence" value="ECO:0007669"/>
    <property type="project" value="UniProtKB-KW"/>
</dbReference>
<dbReference type="CDD" id="cd05478">
    <property type="entry name" value="pepsin_A"/>
    <property type="match status" value="1"/>
</dbReference>
<dbReference type="FunFam" id="2.40.70.10:FF:000006">
    <property type="entry name" value="Cathepsin E"/>
    <property type="match status" value="1"/>
</dbReference>
<dbReference type="FunFam" id="2.40.70.10:FF:000004">
    <property type="entry name" value="Pepsin A"/>
    <property type="match status" value="1"/>
</dbReference>
<dbReference type="Gene3D" id="6.10.140.60">
    <property type="match status" value="1"/>
</dbReference>
<dbReference type="Gene3D" id="2.40.70.10">
    <property type="entry name" value="Acid Proteases"/>
    <property type="match status" value="2"/>
</dbReference>
<dbReference type="InterPro" id="IPR001461">
    <property type="entry name" value="Aspartic_peptidase_A1"/>
</dbReference>
<dbReference type="InterPro" id="IPR001969">
    <property type="entry name" value="Aspartic_peptidase_AS"/>
</dbReference>
<dbReference type="InterPro" id="IPR012848">
    <property type="entry name" value="Aspartic_peptidase_N"/>
</dbReference>
<dbReference type="InterPro" id="IPR034162">
    <property type="entry name" value="Pepsin_A"/>
</dbReference>
<dbReference type="InterPro" id="IPR033121">
    <property type="entry name" value="PEPTIDASE_A1"/>
</dbReference>
<dbReference type="InterPro" id="IPR021109">
    <property type="entry name" value="Peptidase_aspartic_dom_sf"/>
</dbReference>
<dbReference type="PANTHER" id="PTHR47966">
    <property type="entry name" value="BETA-SITE APP-CLEAVING ENZYME, ISOFORM A-RELATED"/>
    <property type="match status" value="1"/>
</dbReference>
<dbReference type="PANTHER" id="PTHR47966:SF22">
    <property type="entry name" value="PEPSIN A-3-RELATED"/>
    <property type="match status" value="1"/>
</dbReference>
<dbReference type="Pfam" id="PF07966">
    <property type="entry name" value="A1_Propeptide"/>
    <property type="match status" value="1"/>
</dbReference>
<dbReference type="Pfam" id="PF00026">
    <property type="entry name" value="Asp"/>
    <property type="match status" value="1"/>
</dbReference>
<dbReference type="PRINTS" id="PR00792">
    <property type="entry name" value="PEPSIN"/>
</dbReference>
<dbReference type="SUPFAM" id="SSF50630">
    <property type="entry name" value="Acid proteases"/>
    <property type="match status" value="1"/>
</dbReference>
<dbReference type="PROSITE" id="PS00141">
    <property type="entry name" value="ASP_PROTEASE"/>
    <property type="match status" value="2"/>
</dbReference>
<dbReference type="PROSITE" id="PS51767">
    <property type="entry name" value="PEPTIDASE_A1"/>
    <property type="match status" value="1"/>
</dbReference>
<keyword id="KW-0064">Aspartyl protease</keyword>
<keyword id="KW-0222">Digestion</keyword>
<keyword id="KW-1015">Disulfide bond</keyword>
<keyword id="KW-0378">Hydrolase</keyword>
<keyword id="KW-0597">Phosphoprotein</keyword>
<keyword id="KW-0645">Protease</keyword>
<keyword id="KW-1185">Reference proteome</keyword>
<keyword id="KW-0964">Secreted</keyword>
<keyword id="KW-0732">Signal</keyword>
<keyword id="KW-0865">Zymogen</keyword>
<comment type="function">
    <text>Shows particularly broad specificity; although bonds involving phenylalanine and leucine are preferred, many others are also cleaved to some extent.</text>
</comment>
<comment type="catalytic activity">
    <reaction evidence="4">
        <text>Preferential cleavage: hydrophobic, preferably aromatic, residues in P1 and P1' positions. Cleaves 1-Phe-|-Val-2, 4-Gln-|-His-5, 13-Glu-|-Ala-14, 14-Ala-|-Leu-15, 15-Leu-|-Tyr-16, 16-Tyr-|-Leu-17, 23-Gly-|-Phe-24, 24-Phe-|-Phe-25 and 25-Phe-|-Tyr-26 bonds in the B chain of insulin.</text>
        <dbReference type="EC" id="3.4.23.1"/>
    </reaction>
</comment>
<comment type="subcellular location">
    <subcellularLocation>
        <location>Secreted</location>
    </subcellularLocation>
</comment>
<comment type="developmental stage">
    <text>Pepsinogens in group I, II, and III where the predominant zymogens at late postnatal stage.</text>
</comment>
<comment type="similarity">
    <text evidence="5">Belongs to the peptidase A1 family.</text>
</comment>
<evidence type="ECO:0000250" key="1"/>
<evidence type="ECO:0000250" key="2">
    <source>
        <dbReference type="UniProtKB" id="P03954"/>
    </source>
</evidence>
<evidence type="ECO:0000255" key="3">
    <source>
        <dbReference type="PROSITE-ProRule" id="PRU01103"/>
    </source>
</evidence>
<evidence type="ECO:0000255" key="4">
    <source>
        <dbReference type="PROSITE-ProRule" id="PRU10094"/>
    </source>
</evidence>
<evidence type="ECO:0000305" key="5"/>
<name>PEPA2_RABIT</name>
<organism>
    <name type="scientific">Oryctolagus cuniculus</name>
    <name type="common">Rabbit</name>
    <dbReference type="NCBI Taxonomy" id="9986"/>
    <lineage>
        <taxon>Eukaryota</taxon>
        <taxon>Metazoa</taxon>
        <taxon>Chordata</taxon>
        <taxon>Craniata</taxon>
        <taxon>Vertebrata</taxon>
        <taxon>Euteleostomi</taxon>
        <taxon>Mammalia</taxon>
        <taxon>Eutheria</taxon>
        <taxon>Euarchontoglires</taxon>
        <taxon>Glires</taxon>
        <taxon>Lagomorpha</taxon>
        <taxon>Leporidae</taxon>
        <taxon>Oryctolagus</taxon>
    </lineage>
</organism>
<proteinExistence type="evidence at transcript level"/>
<protein>
    <recommendedName>
        <fullName>Pepsin II-2/3</fullName>
        <ecNumber>3.4.23.1</ecNumber>
    </recommendedName>
    <alternativeName>
        <fullName>Pepsin A</fullName>
    </alternativeName>
</protein>
<feature type="signal peptide">
    <location>
        <begin position="1"/>
        <end position="15"/>
    </location>
</feature>
<feature type="propeptide" id="PRO_0000026030" description="Activation peptide">
    <location>
        <begin position="16"/>
        <end position="59"/>
    </location>
</feature>
<feature type="chain" id="PRO_0000026031" description="Pepsin II-2/3">
    <location>
        <begin position="60"/>
        <end position="387"/>
    </location>
</feature>
<feature type="domain" description="Peptidase A1" evidence="3">
    <location>
        <begin position="75"/>
        <end position="384"/>
    </location>
</feature>
<feature type="active site" evidence="4">
    <location>
        <position position="93"/>
    </location>
</feature>
<feature type="active site" evidence="4">
    <location>
        <position position="276"/>
    </location>
</feature>
<feature type="modified residue" description="Phosphoserine" evidence="2">
    <location>
        <position position="129"/>
    </location>
</feature>
<feature type="disulfide bond" evidence="1">
    <location>
        <begin position="106"/>
        <end position="111"/>
    </location>
</feature>
<feature type="disulfide bond" evidence="1">
    <location>
        <begin position="267"/>
        <end position="271"/>
    </location>
</feature>
<feature type="disulfide bond" evidence="1">
    <location>
        <begin position="310"/>
        <end position="343"/>
    </location>
</feature>
<accession>P27821</accession>